<comment type="function">
    <text evidence="1">Poorly processive, error-prone DNA polymerase involved in untargeted mutagenesis. Copies undamaged DNA at stalled replication forks, which arise in vivo from mismatched or misaligned primer ends. These misaligned primers can be extended by PolIV. Exhibits no 3'-5' exonuclease (proofreading) activity. May be involved in translesional synthesis, in conjunction with the beta clamp from PolIII.</text>
</comment>
<comment type="catalytic activity">
    <reaction evidence="1">
        <text>DNA(n) + a 2'-deoxyribonucleoside 5'-triphosphate = DNA(n+1) + diphosphate</text>
        <dbReference type="Rhea" id="RHEA:22508"/>
        <dbReference type="Rhea" id="RHEA-COMP:17339"/>
        <dbReference type="Rhea" id="RHEA-COMP:17340"/>
        <dbReference type="ChEBI" id="CHEBI:33019"/>
        <dbReference type="ChEBI" id="CHEBI:61560"/>
        <dbReference type="ChEBI" id="CHEBI:173112"/>
        <dbReference type="EC" id="2.7.7.7"/>
    </reaction>
</comment>
<comment type="cofactor">
    <cofactor evidence="1">
        <name>Mg(2+)</name>
        <dbReference type="ChEBI" id="CHEBI:18420"/>
    </cofactor>
    <text evidence="1">Binds 2 magnesium ions per subunit.</text>
</comment>
<comment type="subunit">
    <text evidence="1">Monomer.</text>
</comment>
<comment type="subcellular location">
    <subcellularLocation>
        <location evidence="1">Cytoplasm</location>
    </subcellularLocation>
</comment>
<comment type="similarity">
    <text evidence="1">Belongs to the DNA polymerase type-Y family.</text>
</comment>
<reference key="1">
    <citation type="journal article" date="2004" name="Environ. Microbiol.">
        <title>The genome of Desulfotalea psychrophila, a sulfate-reducing bacterium from permanently cold Arctic sediments.</title>
        <authorList>
            <person name="Rabus R."/>
            <person name="Ruepp A."/>
            <person name="Frickey T."/>
            <person name="Rattei T."/>
            <person name="Fartmann B."/>
            <person name="Stark M."/>
            <person name="Bauer M."/>
            <person name="Zibat A."/>
            <person name="Lombardot T."/>
            <person name="Becker I."/>
            <person name="Amann J."/>
            <person name="Gellner K."/>
            <person name="Teeling H."/>
            <person name="Leuschner W.D."/>
            <person name="Gloeckner F.-O."/>
            <person name="Lupas A.N."/>
            <person name="Amann R."/>
            <person name="Klenk H.-P."/>
        </authorList>
    </citation>
    <scope>NUCLEOTIDE SEQUENCE [LARGE SCALE GENOMIC DNA]</scope>
    <source>
        <strain>DSM 12343 / LSv54</strain>
    </source>
</reference>
<dbReference type="EC" id="2.7.7.7" evidence="1"/>
<dbReference type="EMBL" id="CR522870">
    <property type="protein sequence ID" value="CAG36927.1"/>
    <property type="molecule type" value="Genomic_DNA"/>
</dbReference>
<dbReference type="SMR" id="Q6AL48"/>
<dbReference type="STRING" id="177439.DP2198"/>
<dbReference type="KEGG" id="dps:DP2198"/>
<dbReference type="eggNOG" id="COG0389">
    <property type="taxonomic scope" value="Bacteria"/>
</dbReference>
<dbReference type="HOGENOM" id="CLU_012348_1_2_7"/>
<dbReference type="OrthoDB" id="9808813at2"/>
<dbReference type="Proteomes" id="UP000000602">
    <property type="component" value="Chromosome"/>
</dbReference>
<dbReference type="GO" id="GO:0005829">
    <property type="term" value="C:cytosol"/>
    <property type="evidence" value="ECO:0007669"/>
    <property type="project" value="TreeGrafter"/>
</dbReference>
<dbReference type="GO" id="GO:0003684">
    <property type="term" value="F:damaged DNA binding"/>
    <property type="evidence" value="ECO:0007669"/>
    <property type="project" value="InterPro"/>
</dbReference>
<dbReference type="GO" id="GO:0003887">
    <property type="term" value="F:DNA-directed DNA polymerase activity"/>
    <property type="evidence" value="ECO:0007669"/>
    <property type="project" value="UniProtKB-UniRule"/>
</dbReference>
<dbReference type="GO" id="GO:0000287">
    <property type="term" value="F:magnesium ion binding"/>
    <property type="evidence" value="ECO:0007669"/>
    <property type="project" value="UniProtKB-UniRule"/>
</dbReference>
<dbReference type="GO" id="GO:0006261">
    <property type="term" value="P:DNA-templated DNA replication"/>
    <property type="evidence" value="ECO:0007669"/>
    <property type="project" value="UniProtKB-UniRule"/>
</dbReference>
<dbReference type="GO" id="GO:0042276">
    <property type="term" value="P:error-prone translesion synthesis"/>
    <property type="evidence" value="ECO:0007669"/>
    <property type="project" value="TreeGrafter"/>
</dbReference>
<dbReference type="GO" id="GO:0009432">
    <property type="term" value="P:SOS response"/>
    <property type="evidence" value="ECO:0007669"/>
    <property type="project" value="TreeGrafter"/>
</dbReference>
<dbReference type="CDD" id="cd03586">
    <property type="entry name" value="PolY_Pol_IV_kappa"/>
    <property type="match status" value="1"/>
</dbReference>
<dbReference type="FunFam" id="1.10.150.20:FF:000019">
    <property type="entry name" value="DNA polymerase IV"/>
    <property type="match status" value="1"/>
</dbReference>
<dbReference type="FunFam" id="3.30.1490.100:FF:000004">
    <property type="entry name" value="DNA polymerase IV"/>
    <property type="match status" value="1"/>
</dbReference>
<dbReference type="FunFam" id="3.40.1170.60:FF:000001">
    <property type="entry name" value="DNA polymerase IV"/>
    <property type="match status" value="1"/>
</dbReference>
<dbReference type="Gene3D" id="3.30.70.270">
    <property type="match status" value="1"/>
</dbReference>
<dbReference type="Gene3D" id="3.40.1170.60">
    <property type="match status" value="1"/>
</dbReference>
<dbReference type="Gene3D" id="1.10.150.20">
    <property type="entry name" value="5' to 3' exonuclease, C-terminal subdomain"/>
    <property type="match status" value="1"/>
</dbReference>
<dbReference type="Gene3D" id="3.30.1490.100">
    <property type="entry name" value="DNA polymerase, Y-family, little finger domain"/>
    <property type="match status" value="1"/>
</dbReference>
<dbReference type="HAMAP" id="MF_01113">
    <property type="entry name" value="DNApol_IV"/>
    <property type="match status" value="1"/>
</dbReference>
<dbReference type="InterPro" id="IPR043502">
    <property type="entry name" value="DNA/RNA_pol_sf"/>
</dbReference>
<dbReference type="InterPro" id="IPR036775">
    <property type="entry name" value="DNA_pol_Y-fam_lit_finger_sf"/>
</dbReference>
<dbReference type="InterPro" id="IPR017961">
    <property type="entry name" value="DNA_pol_Y-fam_little_finger"/>
</dbReference>
<dbReference type="InterPro" id="IPR050116">
    <property type="entry name" value="DNA_polymerase-Y"/>
</dbReference>
<dbReference type="InterPro" id="IPR022880">
    <property type="entry name" value="DNApol_IV"/>
</dbReference>
<dbReference type="InterPro" id="IPR053848">
    <property type="entry name" value="IMS_HHH_1"/>
</dbReference>
<dbReference type="InterPro" id="IPR043128">
    <property type="entry name" value="Rev_trsase/Diguanyl_cyclase"/>
</dbReference>
<dbReference type="InterPro" id="IPR001126">
    <property type="entry name" value="UmuC"/>
</dbReference>
<dbReference type="NCBIfam" id="NF002677">
    <property type="entry name" value="PRK02406.1"/>
    <property type="match status" value="1"/>
</dbReference>
<dbReference type="PANTHER" id="PTHR11076:SF33">
    <property type="entry name" value="DNA POLYMERASE KAPPA"/>
    <property type="match status" value="1"/>
</dbReference>
<dbReference type="PANTHER" id="PTHR11076">
    <property type="entry name" value="DNA REPAIR POLYMERASE UMUC / TRANSFERASE FAMILY MEMBER"/>
    <property type="match status" value="1"/>
</dbReference>
<dbReference type="Pfam" id="PF00817">
    <property type="entry name" value="IMS"/>
    <property type="match status" value="1"/>
</dbReference>
<dbReference type="Pfam" id="PF11799">
    <property type="entry name" value="IMS_C"/>
    <property type="match status" value="1"/>
</dbReference>
<dbReference type="Pfam" id="PF21999">
    <property type="entry name" value="IMS_HHH_1"/>
    <property type="match status" value="1"/>
</dbReference>
<dbReference type="SUPFAM" id="SSF56672">
    <property type="entry name" value="DNA/RNA polymerases"/>
    <property type="match status" value="1"/>
</dbReference>
<dbReference type="SUPFAM" id="SSF100879">
    <property type="entry name" value="Lesion bypass DNA polymerase (Y-family), little finger domain"/>
    <property type="match status" value="1"/>
</dbReference>
<dbReference type="PROSITE" id="PS50173">
    <property type="entry name" value="UMUC"/>
    <property type="match status" value="1"/>
</dbReference>
<keyword id="KW-0963">Cytoplasm</keyword>
<keyword id="KW-0227">DNA damage</keyword>
<keyword id="KW-0234">DNA repair</keyword>
<keyword id="KW-0235">DNA replication</keyword>
<keyword id="KW-0238">DNA-binding</keyword>
<keyword id="KW-0239">DNA-directed DNA polymerase</keyword>
<keyword id="KW-0460">Magnesium</keyword>
<keyword id="KW-0479">Metal-binding</keyword>
<keyword id="KW-0515">Mutator protein</keyword>
<keyword id="KW-0548">Nucleotidyltransferase</keyword>
<keyword id="KW-1185">Reference proteome</keyword>
<keyword id="KW-0808">Transferase</keyword>
<name>DPO4_DESPS</name>
<gene>
    <name evidence="1" type="primary">dinB</name>
    <name type="ordered locus">DP2198</name>
</gene>
<feature type="chain" id="PRO_1000164000" description="DNA polymerase IV">
    <location>
        <begin position="1"/>
        <end position="376"/>
    </location>
</feature>
<feature type="domain" description="UmuC" evidence="1">
    <location>
        <begin position="6"/>
        <end position="187"/>
    </location>
</feature>
<feature type="active site" evidence="1">
    <location>
        <position position="106"/>
    </location>
</feature>
<feature type="binding site" evidence="1">
    <location>
        <position position="10"/>
    </location>
    <ligand>
        <name>Mg(2+)</name>
        <dbReference type="ChEBI" id="CHEBI:18420"/>
    </ligand>
</feature>
<feature type="binding site" evidence="1">
    <location>
        <position position="105"/>
    </location>
    <ligand>
        <name>Mg(2+)</name>
        <dbReference type="ChEBI" id="CHEBI:18420"/>
    </ligand>
</feature>
<feature type="site" description="Substrate discrimination" evidence="1">
    <location>
        <position position="15"/>
    </location>
</feature>
<organism>
    <name type="scientific">Desulfotalea psychrophila (strain LSv54 / DSM 12343)</name>
    <dbReference type="NCBI Taxonomy" id="177439"/>
    <lineage>
        <taxon>Bacteria</taxon>
        <taxon>Pseudomonadati</taxon>
        <taxon>Thermodesulfobacteriota</taxon>
        <taxon>Desulfobulbia</taxon>
        <taxon>Desulfobulbales</taxon>
        <taxon>Desulfocapsaceae</taxon>
        <taxon>Desulfotalea</taxon>
    </lineage>
</organism>
<proteinExistence type="inferred from homology"/>
<accession>Q6AL48</accession>
<evidence type="ECO:0000255" key="1">
    <source>
        <dbReference type="HAMAP-Rule" id="MF_01113"/>
    </source>
</evidence>
<sequence>MYMRKIIHIDMDAFFASIEQRDRPELRKKPLIVGGLPRGRGVVATCCYEARRYGIHSAMSANRAYKLCPHAVFVKPRMVLYKEVSLQIMAIFREYTKKVEPLSLDEAFLDVTEYLQINGSATLLAREICALIKLRTDLSASAGVSYNKFLAKIASDLKKPGGISTVPPEEARQFIDRLSIGKFYGVGKITKSKMQSLGIQTGKDLRQYSKDFLMKRFGKAGSFFFYNARGLDERPVCPYQNRKSIGKETTLVQDTNRPEEIRDILINLSSLLGKALENNSQLAQTLTLKIRYSDFTTTTRSLSLQKPFSCPADIEECLPSLLTNCNLTHKPIRLLGISLSKLTYIGSAPRPIPLPFPKDRRSNCLNRFFAIKEESP</sequence>
<protein>
    <recommendedName>
        <fullName evidence="1">DNA polymerase IV</fullName>
        <shortName evidence="1">Pol IV</shortName>
        <ecNumber evidence="1">2.7.7.7</ecNumber>
    </recommendedName>
</protein>